<sequence length="707" mass="79464">MDSCHKIDYGLYALEILAQYHNVSVNPEEIKHRFDTDGTGLGLTSWLLAAKSLELKVKQVKKTIDRLNFISLPALVWREDGCHFILTKVSKEANRYLIFDLEQRNPRVLEQSEFEALYQGHIILIASRSSVTGKLAKFDFTWFIPAIIKYRKIFIETLVVSVFLQLFALITPLFFQVVMDKVLVHRGFSTLNVITVALSVVVVFEIILSGLRTYIFAHSTSRIDVELGAKLFRHLLALPISYFESRRVGDTVARVRELDQIRNFLTGQALTSVLDLLFSFIFFAVMWYYSPKLTLVILFSLPCYAAWSVFISPILRRRLDDKFSRNADNQSFLVESVTAINTIKAMAVSPQMTNIWDKQLAGYVAAGFKVTVLATIGQQGIQLIQKTVMIINLWLGAHLVISGDLSIGQLIAFNMLAGQIVAPVIRLAQIWQDFQQVGISVTRLGDVLNSPTESYHGKLALPEINGDITFRNIRFRYKPDSPVILDNINLSIKQGEVIGIVGRSGSGKSTLTKLIQRFYIPENGQVLIDGHDLALADPNWLRRQVGVVLQDNVLLNRSIIDNISLANPGMSVEKVIYAAKLAGAHDFISELREGYNTIVGEQGAGLSGGQRQRIAIARALVNNPKILIFDEATSALDYESEHVIMRNMHKICKGRTVIIIAHRLSTVKNADRIIVMEKGKIVEQGKHKELLSEPESLYSYLYQLQSD</sequence>
<evidence type="ECO:0000250" key="1"/>
<evidence type="ECO:0000255" key="2">
    <source>
        <dbReference type="PROSITE-ProRule" id="PRU00362"/>
    </source>
</evidence>
<evidence type="ECO:0000255" key="3">
    <source>
        <dbReference type="PROSITE-ProRule" id="PRU00434"/>
    </source>
</evidence>
<evidence type="ECO:0000255" key="4">
    <source>
        <dbReference type="PROSITE-ProRule" id="PRU00441"/>
    </source>
</evidence>
<evidence type="ECO:0000305" key="5"/>
<name>HLYBC_ECOLX</name>
<organism>
    <name type="scientific">Escherichia coli</name>
    <dbReference type="NCBI Taxonomy" id="562"/>
    <lineage>
        <taxon>Bacteria</taxon>
        <taxon>Pseudomonadati</taxon>
        <taxon>Pseudomonadota</taxon>
        <taxon>Gammaproteobacteria</taxon>
        <taxon>Enterobacterales</taxon>
        <taxon>Enterobacteriaceae</taxon>
        <taxon>Escherichia</taxon>
    </lineage>
</organism>
<accession>P10089</accession>
<proteinExistence type="inferred from homology"/>
<protein>
    <recommendedName>
        <fullName>Alpha-hemolysin translocation ATP-binding protein HlyB</fullName>
    </recommendedName>
</protein>
<gene>
    <name type="primary">hlyB</name>
</gene>
<keyword id="KW-0067">ATP-binding</keyword>
<keyword id="KW-0997">Cell inner membrane</keyword>
<keyword id="KW-1003">Cell membrane</keyword>
<keyword id="KW-0378">Hydrolase</keyword>
<keyword id="KW-0472">Membrane</keyword>
<keyword id="KW-0547">Nucleotide-binding</keyword>
<keyword id="KW-0812">Transmembrane</keyword>
<keyword id="KW-1133">Transmembrane helix</keyword>
<keyword id="KW-0813">Transport</keyword>
<dbReference type="EMBL" id="M10133">
    <property type="protein sequence ID" value="AAA23976.1"/>
    <property type="molecule type" value="Genomic_DNA"/>
</dbReference>
<dbReference type="RefSeq" id="WP_021525012.1">
    <property type="nucleotide sequence ID" value="NZ_SAGY01000029.1"/>
</dbReference>
<dbReference type="BMRB" id="P10089"/>
<dbReference type="SMR" id="P10089"/>
<dbReference type="DIP" id="DIP-16931N"/>
<dbReference type="GO" id="GO:0005886">
    <property type="term" value="C:plasma membrane"/>
    <property type="evidence" value="ECO:0007669"/>
    <property type="project" value="UniProtKB-SubCell"/>
</dbReference>
<dbReference type="GO" id="GO:0030256">
    <property type="term" value="C:type I protein secretion system complex"/>
    <property type="evidence" value="ECO:0007669"/>
    <property type="project" value="InterPro"/>
</dbReference>
<dbReference type="GO" id="GO:0140359">
    <property type="term" value="F:ABC-type transporter activity"/>
    <property type="evidence" value="ECO:0007669"/>
    <property type="project" value="InterPro"/>
</dbReference>
<dbReference type="GO" id="GO:0005524">
    <property type="term" value="F:ATP binding"/>
    <property type="evidence" value="ECO:0007669"/>
    <property type="project" value="UniProtKB-KW"/>
</dbReference>
<dbReference type="GO" id="GO:0016887">
    <property type="term" value="F:ATP hydrolysis activity"/>
    <property type="evidence" value="ECO:0007669"/>
    <property type="project" value="InterPro"/>
</dbReference>
<dbReference type="GO" id="GO:0034040">
    <property type="term" value="F:ATPase-coupled lipid transmembrane transporter activity"/>
    <property type="evidence" value="ECO:0007669"/>
    <property type="project" value="TreeGrafter"/>
</dbReference>
<dbReference type="GO" id="GO:0008233">
    <property type="term" value="F:peptidase activity"/>
    <property type="evidence" value="ECO:0007669"/>
    <property type="project" value="InterPro"/>
</dbReference>
<dbReference type="GO" id="GO:0030253">
    <property type="term" value="P:protein secretion by the type I secretion system"/>
    <property type="evidence" value="ECO:0007669"/>
    <property type="project" value="InterPro"/>
</dbReference>
<dbReference type="GO" id="GO:0006508">
    <property type="term" value="P:proteolysis"/>
    <property type="evidence" value="ECO:0007669"/>
    <property type="project" value="InterPro"/>
</dbReference>
<dbReference type="CDD" id="cd18588">
    <property type="entry name" value="ABC_6TM_CyaB_HlyB_like"/>
    <property type="match status" value="1"/>
</dbReference>
<dbReference type="CDD" id="cd03252">
    <property type="entry name" value="ABCC_Hemolysin"/>
    <property type="match status" value="1"/>
</dbReference>
<dbReference type="CDD" id="cd02417">
    <property type="entry name" value="Peptidase_C39_likeA"/>
    <property type="match status" value="1"/>
</dbReference>
<dbReference type="FunFam" id="3.40.50.300:FF:000299">
    <property type="entry name" value="ABC transporter ATP-binding protein/permease"/>
    <property type="match status" value="1"/>
</dbReference>
<dbReference type="FunFam" id="1.20.1560.10:FF:000056">
    <property type="entry name" value="Alpha-hemolysin translocation ATP-binding protein HlyB"/>
    <property type="match status" value="1"/>
</dbReference>
<dbReference type="FunFam" id="3.90.70.10:FF:000148">
    <property type="entry name" value="Alpha-hemolysin translocation ATP-binding protein HlyB"/>
    <property type="match status" value="1"/>
</dbReference>
<dbReference type="Gene3D" id="1.20.1560.10">
    <property type="entry name" value="ABC transporter type 1, transmembrane domain"/>
    <property type="match status" value="1"/>
</dbReference>
<dbReference type="Gene3D" id="3.90.70.10">
    <property type="entry name" value="Cysteine proteinases"/>
    <property type="match status" value="1"/>
</dbReference>
<dbReference type="Gene3D" id="3.40.50.300">
    <property type="entry name" value="P-loop containing nucleotide triphosphate hydrolases"/>
    <property type="match status" value="1"/>
</dbReference>
<dbReference type="InterPro" id="IPR003593">
    <property type="entry name" value="AAA+_ATPase"/>
</dbReference>
<dbReference type="InterPro" id="IPR011527">
    <property type="entry name" value="ABC1_TM_dom"/>
</dbReference>
<dbReference type="InterPro" id="IPR036640">
    <property type="entry name" value="ABC1_TM_sf"/>
</dbReference>
<dbReference type="InterPro" id="IPR003439">
    <property type="entry name" value="ABC_transporter-like_ATP-bd"/>
</dbReference>
<dbReference type="InterPro" id="IPR017871">
    <property type="entry name" value="ABC_transporter-like_CS"/>
</dbReference>
<dbReference type="InterPro" id="IPR010132">
    <property type="entry name" value="ATPase_T1SS_HlyB"/>
</dbReference>
<dbReference type="InterPro" id="IPR027417">
    <property type="entry name" value="P-loop_NTPase"/>
</dbReference>
<dbReference type="InterPro" id="IPR005074">
    <property type="entry name" value="Peptidase_C39"/>
</dbReference>
<dbReference type="InterPro" id="IPR039395">
    <property type="entry name" value="Peptidase_C39-like_A"/>
</dbReference>
<dbReference type="InterPro" id="IPR039421">
    <property type="entry name" value="Type_1_exporter"/>
</dbReference>
<dbReference type="NCBIfam" id="TIGR01846">
    <property type="entry name" value="type_I_sec_HlyB"/>
    <property type="match status" value="1"/>
</dbReference>
<dbReference type="PANTHER" id="PTHR24221">
    <property type="entry name" value="ATP-BINDING CASSETTE SUB-FAMILY B"/>
    <property type="match status" value="1"/>
</dbReference>
<dbReference type="PANTHER" id="PTHR24221:SF647">
    <property type="entry name" value="BLL6336 PROTEIN"/>
    <property type="match status" value="1"/>
</dbReference>
<dbReference type="Pfam" id="PF00664">
    <property type="entry name" value="ABC_membrane"/>
    <property type="match status" value="1"/>
</dbReference>
<dbReference type="Pfam" id="PF00005">
    <property type="entry name" value="ABC_tran"/>
    <property type="match status" value="1"/>
</dbReference>
<dbReference type="Pfam" id="PF03412">
    <property type="entry name" value="Peptidase_C39"/>
    <property type="match status" value="1"/>
</dbReference>
<dbReference type="SMART" id="SM00382">
    <property type="entry name" value="AAA"/>
    <property type="match status" value="1"/>
</dbReference>
<dbReference type="SUPFAM" id="SSF90123">
    <property type="entry name" value="ABC transporter transmembrane region"/>
    <property type="match status" value="1"/>
</dbReference>
<dbReference type="SUPFAM" id="SSF52540">
    <property type="entry name" value="P-loop containing nucleoside triphosphate hydrolases"/>
    <property type="match status" value="1"/>
</dbReference>
<dbReference type="PROSITE" id="PS50929">
    <property type="entry name" value="ABC_TM1F"/>
    <property type="match status" value="1"/>
</dbReference>
<dbReference type="PROSITE" id="PS00211">
    <property type="entry name" value="ABC_TRANSPORTER_1"/>
    <property type="match status" value="1"/>
</dbReference>
<dbReference type="PROSITE" id="PS50893">
    <property type="entry name" value="ABC_TRANSPORTER_2"/>
    <property type="match status" value="1"/>
</dbReference>
<dbReference type="PROSITE" id="PS50990">
    <property type="entry name" value="PEPTIDASE_C39"/>
    <property type="match status" value="1"/>
</dbReference>
<comment type="function">
    <text evidence="1">Part of the ABC transporter complex HlyBD involved in hemolysin export. Transmembrane domains (TMD) form a pore in the inner membrane and the ATP-binding domain (NBD) is responsible for energy generation (By similarity).</text>
</comment>
<comment type="subunit">
    <text>Homodimer.</text>
</comment>
<comment type="subcellular location">
    <subcellularLocation>
        <location evidence="5">Cell inner membrane</location>
        <topology evidence="5">Multi-pass membrane protein</topology>
    </subcellularLocation>
</comment>
<comment type="domain">
    <text>In HlyB the peptidase C39 domain, the ATP-binding domain (NBD) and the transmembrane domain (TMD) are fused.</text>
</comment>
<comment type="miscellaneous">
    <text evidence="1">The complex HlyBD-TolC (OMF) forms a single transport channel across the two membranes, allowing direct export of alpha-hemolysin. These channel is involved in type 1 secretion system (By similarity).</text>
</comment>
<comment type="similarity">
    <text evidence="5">Belongs to the ABC transporter superfamily. Protein-1 exporter (TC 3.A.1.109) family.</text>
</comment>
<comment type="caution">
    <text evidence="5">Tyr-9 is present instead of the conserved Cys which is expected to be the active site residue of peptidase C39. Thus they are presumed to be without peptidase activity.</text>
</comment>
<reference key="1">
    <citation type="journal article" date="1985" name="J. Bacteriol.">
        <title>Nucleotide sequence of an Escherichia coli chromosomal hemolysin.</title>
        <authorList>
            <person name="Felmlee T."/>
            <person name="Pellett S."/>
            <person name="Welch R.A."/>
        </authorList>
    </citation>
    <scope>NUCLEOTIDE SEQUENCE [GENOMIC DNA]</scope>
    <source>
        <strain>J96 / Serotype O4</strain>
    </source>
</reference>
<feature type="chain" id="PRO_0000092372" description="Alpha-hemolysin translocation ATP-binding protein HlyB">
    <location>
        <begin position="1"/>
        <end position="707"/>
    </location>
</feature>
<feature type="transmembrane region" description="Helical" evidence="4">
    <location>
        <begin position="158"/>
        <end position="178"/>
    </location>
</feature>
<feature type="transmembrane region" description="Helical" evidence="4">
    <location>
        <begin position="191"/>
        <end position="211"/>
    </location>
</feature>
<feature type="transmembrane region" description="Helical" evidence="4">
    <location>
        <begin position="269"/>
        <end position="289"/>
    </location>
</feature>
<feature type="transmembrane region" description="Helical" evidence="4">
    <location>
        <begin position="295"/>
        <end position="315"/>
    </location>
</feature>
<feature type="transmembrane region" description="Helical" evidence="4">
    <location>
        <begin position="388"/>
        <end position="408"/>
    </location>
</feature>
<feature type="domain" description="Peptidase C39" evidence="2">
    <location>
        <begin position="3"/>
        <end position="125"/>
    </location>
</feature>
<feature type="domain" description="ABC transmembrane type-1" evidence="4">
    <location>
        <begin position="154"/>
        <end position="436"/>
    </location>
</feature>
<feature type="domain" description="ABC transporter" evidence="2 3">
    <location>
        <begin position="468"/>
        <end position="703"/>
    </location>
</feature>
<feature type="active site" evidence="2">
    <location>
        <position position="83"/>
    </location>
</feature>
<feature type="binding site" evidence="2 3">
    <location>
        <begin position="502"/>
        <end position="509"/>
    </location>
    <ligand>
        <name>ATP</name>
        <dbReference type="ChEBI" id="CHEBI:30616"/>
    </ligand>
</feature>